<keyword id="KW-0067">ATP-binding</keyword>
<keyword id="KW-0963">Cytoplasm</keyword>
<keyword id="KW-0436">Ligase</keyword>
<keyword id="KW-0547">Nucleotide-binding</keyword>
<keyword id="KW-0658">Purine biosynthesis</keyword>
<keyword id="KW-1185">Reference proteome</keyword>
<comment type="catalytic activity">
    <reaction evidence="1">
        <text>2-formamido-N(1)-(5-O-phospho-beta-D-ribosyl)acetamidine + ATP = 5-amino-1-(5-phospho-beta-D-ribosyl)imidazole + ADP + phosphate + H(+)</text>
        <dbReference type="Rhea" id="RHEA:23032"/>
        <dbReference type="ChEBI" id="CHEBI:15378"/>
        <dbReference type="ChEBI" id="CHEBI:30616"/>
        <dbReference type="ChEBI" id="CHEBI:43474"/>
        <dbReference type="ChEBI" id="CHEBI:137981"/>
        <dbReference type="ChEBI" id="CHEBI:147287"/>
        <dbReference type="ChEBI" id="CHEBI:456216"/>
        <dbReference type="EC" id="6.3.3.1"/>
    </reaction>
</comment>
<comment type="pathway">
    <text evidence="1">Purine metabolism; IMP biosynthesis via de novo pathway; 5-amino-1-(5-phospho-D-ribosyl)imidazole from N(2)-formyl-N(1)-(5-phospho-D-ribosyl)glycinamide: step 2/2.</text>
</comment>
<comment type="subcellular location">
    <subcellularLocation>
        <location evidence="1">Cytoplasm</location>
    </subcellularLocation>
</comment>
<comment type="similarity">
    <text evidence="1">Belongs to the AIR synthase family.</text>
</comment>
<protein>
    <recommendedName>
        <fullName evidence="1">Phosphoribosylformylglycinamidine cyclo-ligase</fullName>
        <ecNumber evidence="1">6.3.3.1</ecNumber>
    </recommendedName>
    <alternativeName>
        <fullName evidence="1">AIR synthase</fullName>
    </alternativeName>
    <alternativeName>
        <fullName evidence="1">AIRS</fullName>
    </alternativeName>
    <alternativeName>
        <fullName evidence="1">Phosphoribosyl-aminoimidazole synthetase</fullName>
    </alternativeName>
</protein>
<sequence>MSKQPSLSYKDAGVDIDAGEALVERIKGVAKRTARPEVMGGLGGFGALCEIPAGYKQPVLVSGTDGVGTKLRLALNLNKHDSIGQDLVAMCVNDLVVCGAEPLFFLDYYATGKLNVDVAATVVTGIGAGCELAGCSLVGGETAEMPGMYEGEDYDLAGFCVGVVEKAEIIDGSKVATGDALIALPSSGPHSNGYSLIRKILEVSATDIENTQLDGKPLTDLLMAPTRIYVKPLLQLIKNTGAVKAMAHITGGGLLDNIPRVLPKNAQAVVDVASWQRPAVFDFLQEKGNVDEHEMHRVLNCGVGMVICVAQDQVEAALNELRAAGEQPWVIGHIAEAAEGAAQVELQNLKAH</sequence>
<dbReference type="EC" id="6.3.3.1" evidence="1"/>
<dbReference type="EMBL" id="AE015451">
    <property type="protein sequence ID" value="AAN67286.1"/>
    <property type="molecule type" value="Genomic_DNA"/>
</dbReference>
<dbReference type="RefSeq" id="NP_743822.1">
    <property type="nucleotide sequence ID" value="NC_002947.4"/>
</dbReference>
<dbReference type="RefSeq" id="WP_003252437.1">
    <property type="nucleotide sequence ID" value="NZ_CP169744.1"/>
</dbReference>
<dbReference type="SMR" id="Q88MA9"/>
<dbReference type="STRING" id="160488.PP_1665"/>
<dbReference type="PaxDb" id="160488-PP_1665"/>
<dbReference type="GeneID" id="83681857"/>
<dbReference type="KEGG" id="ppu:PP_1665"/>
<dbReference type="PATRIC" id="fig|160488.4.peg.1758"/>
<dbReference type="eggNOG" id="COG0150">
    <property type="taxonomic scope" value="Bacteria"/>
</dbReference>
<dbReference type="HOGENOM" id="CLU_047116_0_0_6"/>
<dbReference type="OrthoDB" id="9777881at2"/>
<dbReference type="PhylomeDB" id="Q88MA9"/>
<dbReference type="BioCyc" id="PPUT160488:G1G01-1763-MONOMER"/>
<dbReference type="UniPathway" id="UPA00074">
    <property type="reaction ID" value="UER00129"/>
</dbReference>
<dbReference type="Proteomes" id="UP000000556">
    <property type="component" value="Chromosome"/>
</dbReference>
<dbReference type="GO" id="GO:0005829">
    <property type="term" value="C:cytosol"/>
    <property type="evidence" value="ECO:0007669"/>
    <property type="project" value="TreeGrafter"/>
</dbReference>
<dbReference type="GO" id="GO:0005524">
    <property type="term" value="F:ATP binding"/>
    <property type="evidence" value="ECO:0007669"/>
    <property type="project" value="UniProtKB-KW"/>
</dbReference>
<dbReference type="GO" id="GO:0004637">
    <property type="term" value="F:phosphoribosylamine-glycine ligase activity"/>
    <property type="evidence" value="ECO:0007669"/>
    <property type="project" value="TreeGrafter"/>
</dbReference>
<dbReference type="GO" id="GO:0004641">
    <property type="term" value="F:phosphoribosylformylglycinamidine cyclo-ligase activity"/>
    <property type="evidence" value="ECO:0007669"/>
    <property type="project" value="UniProtKB-UniRule"/>
</dbReference>
<dbReference type="GO" id="GO:0006189">
    <property type="term" value="P:'de novo' IMP biosynthetic process"/>
    <property type="evidence" value="ECO:0007669"/>
    <property type="project" value="UniProtKB-UniRule"/>
</dbReference>
<dbReference type="GO" id="GO:0046084">
    <property type="term" value="P:adenine biosynthetic process"/>
    <property type="evidence" value="ECO:0007669"/>
    <property type="project" value="TreeGrafter"/>
</dbReference>
<dbReference type="CDD" id="cd02196">
    <property type="entry name" value="PurM"/>
    <property type="match status" value="1"/>
</dbReference>
<dbReference type="FunFam" id="3.30.1330.10:FF:000001">
    <property type="entry name" value="Phosphoribosylformylglycinamidine cyclo-ligase"/>
    <property type="match status" value="1"/>
</dbReference>
<dbReference type="FunFam" id="3.90.650.10:FF:000001">
    <property type="entry name" value="Phosphoribosylformylglycinamidine cyclo-ligase"/>
    <property type="match status" value="1"/>
</dbReference>
<dbReference type="Gene3D" id="3.90.650.10">
    <property type="entry name" value="PurM-like C-terminal domain"/>
    <property type="match status" value="1"/>
</dbReference>
<dbReference type="Gene3D" id="3.30.1330.10">
    <property type="entry name" value="PurM-like, N-terminal domain"/>
    <property type="match status" value="1"/>
</dbReference>
<dbReference type="HAMAP" id="MF_00741">
    <property type="entry name" value="AIRS"/>
    <property type="match status" value="1"/>
</dbReference>
<dbReference type="InterPro" id="IPR010918">
    <property type="entry name" value="PurM-like_C_dom"/>
</dbReference>
<dbReference type="InterPro" id="IPR036676">
    <property type="entry name" value="PurM-like_C_sf"/>
</dbReference>
<dbReference type="InterPro" id="IPR016188">
    <property type="entry name" value="PurM-like_N"/>
</dbReference>
<dbReference type="InterPro" id="IPR036921">
    <property type="entry name" value="PurM-like_N_sf"/>
</dbReference>
<dbReference type="InterPro" id="IPR004733">
    <property type="entry name" value="PurM_cligase"/>
</dbReference>
<dbReference type="NCBIfam" id="TIGR00878">
    <property type="entry name" value="purM"/>
    <property type="match status" value="1"/>
</dbReference>
<dbReference type="PANTHER" id="PTHR10520:SF12">
    <property type="entry name" value="TRIFUNCTIONAL PURINE BIOSYNTHETIC PROTEIN ADENOSINE-3"/>
    <property type="match status" value="1"/>
</dbReference>
<dbReference type="PANTHER" id="PTHR10520">
    <property type="entry name" value="TRIFUNCTIONAL PURINE BIOSYNTHETIC PROTEIN ADENOSINE-3-RELATED"/>
    <property type="match status" value="1"/>
</dbReference>
<dbReference type="Pfam" id="PF00586">
    <property type="entry name" value="AIRS"/>
    <property type="match status" value="1"/>
</dbReference>
<dbReference type="Pfam" id="PF02769">
    <property type="entry name" value="AIRS_C"/>
    <property type="match status" value="1"/>
</dbReference>
<dbReference type="SUPFAM" id="SSF56042">
    <property type="entry name" value="PurM C-terminal domain-like"/>
    <property type="match status" value="1"/>
</dbReference>
<dbReference type="SUPFAM" id="SSF55326">
    <property type="entry name" value="PurM N-terminal domain-like"/>
    <property type="match status" value="1"/>
</dbReference>
<name>PUR5_PSEPK</name>
<feature type="chain" id="PRO_0000148234" description="Phosphoribosylformylglycinamidine cyclo-ligase">
    <location>
        <begin position="1"/>
        <end position="352"/>
    </location>
</feature>
<accession>Q88MA9</accession>
<reference key="1">
    <citation type="journal article" date="2002" name="Environ. Microbiol.">
        <title>Complete genome sequence and comparative analysis of the metabolically versatile Pseudomonas putida KT2440.</title>
        <authorList>
            <person name="Nelson K.E."/>
            <person name="Weinel C."/>
            <person name="Paulsen I.T."/>
            <person name="Dodson R.J."/>
            <person name="Hilbert H."/>
            <person name="Martins dos Santos V.A.P."/>
            <person name="Fouts D.E."/>
            <person name="Gill S.R."/>
            <person name="Pop M."/>
            <person name="Holmes M."/>
            <person name="Brinkac L.M."/>
            <person name="Beanan M.J."/>
            <person name="DeBoy R.T."/>
            <person name="Daugherty S.C."/>
            <person name="Kolonay J.F."/>
            <person name="Madupu R."/>
            <person name="Nelson W.C."/>
            <person name="White O."/>
            <person name="Peterson J.D."/>
            <person name="Khouri H.M."/>
            <person name="Hance I."/>
            <person name="Chris Lee P."/>
            <person name="Holtzapple E.K."/>
            <person name="Scanlan D."/>
            <person name="Tran K."/>
            <person name="Moazzez A."/>
            <person name="Utterback T.R."/>
            <person name="Rizzo M."/>
            <person name="Lee K."/>
            <person name="Kosack D."/>
            <person name="Moestl D."/>
            <person name="Wedler H."/>
            <person name="Lauber J."/>
            <person name="Stjepandic D."/>
            <person name="Hoheisel J."/>
            <person name="Straetz M."/>
            <person name="Heim S."/>
            <person name="Kiewitz C."/>
            <person name="Eisen J.A."/>
            <person name="Timmis K.N."/>
            <person name="Duesterhoeft A."/>
            <person name="Tuemmler B."/>
            <person name="Fraser C.M."/>
        </authorList>
    </citation>
    <scope>NUCLEOTIDE SEQUENCE [LARGE SCALE GENOMIC DNA]</scope>
    <source>
        <strain>ATCC 47054 / DSM 6125 / CFBP 8728 / NCIMB 11950 / KT2440</strain>
    </source>
</reference>
<proteinExistence type="inferred from homology"/>
<evidence type="ECO:0000255" key="1">
    <source>
        <dbReference type="HAMAP-Rule" id="MF_00741"/>
    </source>
</evidence>
<gene>
    <name evidence="1" type="primary">purM</name>
    <name type="ordered locus">PP_1665</name>
</gene>
<organism>
    <name type="scientific">Pseudomonas putida (strain ATCC 47054 / DSM 6125 / CFBP 8728 / NCIMB 11950 / KT2440)</name>
    <dbReference type="NCBI Taxonomy" id="160488"/>
    <lineage>
        <taxon>Bacteria</taxon>
        <taxon>Pseudomonadati</taxon>
        <taxon>Pseudomonadota</taxon>
        <taxon>Gammaproteobacteria</taxon>
        <taxon>Pseudomonadales</taxon>
        <taxon>Pseudomonadaceae</taxon>
        <taxon>Pseudomonas</taxon>
    </lineage>
</organism>